<proteinExistence type="evidence at transcript level"/>
<accession>Q03878</accession>
<keyword id="KW-0694">RNA-binding</keyword>
<reference key="1">
    <citation type="journal article" date="1992" name="Plant Physiol.">
        <title>A wound-inducible glycine-rich protein from Daucus carota with homology to single-stranded nucleic acid binding proteins.</title>
        <authorList>
            <person name="Sturm A."/>
        </authorList>
    </citation>
    <scope>NUCLEOTIDE SEQUENCE [MRNA]</scope>
    <source>
        <strain>cv. Queen Anne's Lace</strain>
    </source>
</reference>
<organism>
    <name type="scientific">Daucus carota</name>
    <name type="common">Wild carrot</name>
    <dbReference type="NCBI Taxonomy" id="4039"/>
    <lineage>
        <taxon>Eukaryota</taxon>
        <taxon>Viridiplantae</taxon>
        <taxon>Streptophyta</taxon>
        <taxon>Embryophyta</taxon>
        <taxon>Tracheophyta</taxon>
        <taxon>Spermatophyta</taxon>
        <taxon>Magnoliopsida</taxon>
        <taxon>eudicotyledons</taxon>
        <taxon>Gunneridae</taxon>
        <taxon>Pentapetalae</taxon>
        <taxon>asterids</taxon>
        <taxon>campanulids</taxon>
        <taxon>Apiales</taxon>
        <taxon>Apiaceae</taxon>
        <taxon>Apioideae</taxon>
        <taxon>Scandiceae</taxon>
        <taxon>Daucinae</taxon>
        <taxon>Daucus</taxon>
        <taxon>Daucus sect. Daucus</taxon>
    </lineage>
</organism>
<sequence>MAEVEYRCFVGGLAWATNDESLEQAFSQFGDITDSKIINDRETGRSRGFGFVTFKDEKSMRDAIEGMNGQELDGRNITVNEAQSRGSGGGGGRREGGGGGYGGGGGYGGRREGGGGGGYGGRREGGGGGYGGGGGGYGGRREGGDGGYGGGGGGSRW</sequence>
<evidence type="ECO:0000255" key="1">
    <source>
        <dbReference type="PROSITE-ProRule" id="PRU00176"/>
    </source>
</evidence>
<evidence type="ECO:0000256" key="2">
    <source>
        <dbReference type="SAM" id="MobiDB-lite"/>
    </source>
</evidence>
<protein>
    <recommendedName>
        <fullName>Glycine-rich RNA-binding protein</fullName>
    </recommendedName>
</protein>
<dbReference type="EMBL" id="X58146">
    <property type="protein sequence ID" value="CAA41152.1"/>
    <property type="molecule type" value="mRNA"/>
</dbReference>
<dbReference type="PIR" id="S14857">
    <property type="entry name" value="S14857"/>
</dbReference>
<dbReference type="SMR" id="Q03878"/>
<dbReference type="OMA" id="GWEDRSY"/>
<dbReference type="GO" id="GO:0003723">
    <property type="term" value="F:RNA binding"/>
    <property type="evidence" value="ECO:0007669"/>
    <property type="project" value="UniProtKB-KW"/>
</dbReference>
<dbReference type="CDD" id="cd21608">
    <property type="entry name" value="RRM2_NsCP33_like"/>
    <property type="match status" value="1"/>
</dbReference>
<dbReference type="FunFam" id="3.30.70.330:FF:000430">
    <property type="entry name" value="Glycine-rich RNA-binding protein GRP1A"/>
    <property type="match status" value="1"/>
</dbReference>
<dbReference type="Gene3D" id="3.30.70.330">
    <property type="match status" value="1"/>
</dbReference>
<dbReference type="InterPro" id="IPR012677">
    <property type="entry name" value="Nucleotide-bd_a/b_plait_sf"/>
</dbReference>
<dbReference type="InterPro" id="IPR035979">
    <property type="entry name" value="RBD_domain_sf"/>
</dbReference>
<dbReference type="InterPro" id="IPR048289">
    <property type="entry name" value="RRM2_NsCP33-like"/>
</dbReference>
<dbReference type="InterPro" id="IPR000504">
    <property type="entry name" value="RRM_dom"/>
</dbReference>
<dbReference type="InterPro" id="IPR052462">
    <property type="entry name" value="SLIRP/GR-RBP-like"/>
</dbReference>
<dbReference type="PANTHER" id="PTHR48027">
    <property type="entry name" value="HETEROGENEOUS NUCLEAR RIBONUCLEOPROTEIN 87F-RELATED"/>
    <property type="match status" value="1"/>
</dbReference>
<dbReference type="Pfam" id="PF00076">
    <property type="entry name" value="RRM_1"/>
    <property type="match status" value="1"/>
</dbReference>
<dbReference type="SMART" id="SM00360">
    <property type="entry name" value="RRM"/>
    <property type="match status" value="1"/>
</dbReference>
<dbReference type="SUPFAM" id="SSF54928">
    <property type="entry name" value="RNA-binding domain, RBD"/>
    <property type="match status" value="1"/>
</dbReference>
<dbReference type="PROSITE" id="PS50102">
    <property type="entry name" value="RRM"/>
    <property type="match status" value="1"/>
</dbReference>
<feature type="chain" id="PRO_0000081608" description="Glycine-rich RNA-binding protein">
    <location>
        <begin position="1"/>
        <end position="157"/>
    </location>
</feature>
<feature type="domain" description="RRM" evidence="1">
    <location>
        <begin position="6"/>
        <end position="84"/>
    </location>
</feature>
<feature type="region of interest" description="Disordered" evidence="2">
    <location>
        <begin position="70"/>
        <end position="157"/>
    </location>
</feature>
<feature type="compositionally biased region" description="Gly residues" evidence="2">
    <location>
        <begin position="86"/>
        <end position="138"/>
    </location>
</feature>
<feature type="compositionally biased region" description="Gly residues" evidence="2">
    <location>
        <begin position="145"/>
        <end position="157"/>
    </location>
</feature>
<name>GRP1_DAUCA</name>
<comment type="function">
    <text>May play a role in the biosynthesis and processing of heterogeneous nuclear RNA and in the maturation of specific mRNAs in response to wounding.</text>
</comment>
<comment type="induction">
    <text>In response to stress by wounding.</text>
</comment>